<name>CY1_HUMAN</name>
<reference key="1">
    <citation type="journal article" date="1988" name="Nucleic Acids Res.">
        <title>Nucleotide sequence of a cDNA encoding the precursor to human cytochrome c1.</title>
        <authorList>
            <person name="Nishikimi M."/>
            <person name="Ohta S."/>
            <person name="Suzuki H."/>
            <person name="Tanaka T."/>
            <person name="Kikkawa F."/>
            <person name="Tanaka M."/>
            <person name="Kagawa Y."/>
            <person name="Ozawa T."/>
        </authorList>
    </citation>
    <scope>NUCLEOTIDE SEQUENCE [MRNA]</scope>
    <scope>VARIANTS VAL-76 AND VAL-89</scope>
</reference>
<reference key="2">
    <citation type="journal article" date="1989" name="J. Biol. Chem.">
        <title>Structural organization of the human mitochondrial cytochrome c1 gene.</title>
        <authorList>
            <person name="Suzuki H."/>
            <person name="Hosokawa Y."/>
            <person name="Nishikimi M."/>
            <person name="Ozawa T."/>
        </authorList>
    </citation>
    <scope>NUCLEOTIDE SEQUENCE [GENOMIC DNA]</scope>
    <scope>VARIANT VAL-76</scope>
</reference>
<reference key="3">
    <citation type="submission" date="2004-06" db="EMBL/GenBank/DDBJ databases">
        <title>Cloning of human full open reading frames in Gateway(TM) system entry vector (pDONR201).</title>
        <authorList>
            <person name="Halleck A."/>
            <person name="Ebert L."/>
            <person name="Mkoundinya M."/>
            <person name="Schick M."/>
            <person name="Eisenstein S."/>
            <person name="Neubert P."/>
            <person name="Kstrang K."/>
            <person name="Schatten R."/>
            <person name="Shen B."/>
            <person name="Henze S."/>
            <person name="Mar W."/>
            <person name="Korn B."/>
            <person name="Zuo D."/>
            <person name="Hu Y."/>
            <person name="LaBaer J."/>
        </authorList>
    </citation>
    <scope>NUCLEOTIDE SEQUENCE [LARGE SCALE MRNA]</scope>
    <scope>VARIANT VAL-76</scope>
</reference>
<reference key="4">
    <citation type="submission" date="2004-10" db="EMBL/GenBank/DDBJ databases">
        <title>Cloning of human full-length CDSs in BD Creator(TM) system donor vector.</title>
        <authorList>
            <person name="Kalnine N."/>
            <person name="Chen X."/>
            <person name="Rolfs A."/>
            <person name="Halleck A."/>
            <person name="Hines L."/>
            <person name="Eisenstein S."/>
            <person name="Koundinya M."/>
            <person name="Raphael J."/>
            <person name="Moreira D."/>
            <person name="Kelley T."/>
            <person name="LaBaer J."/>
            <person name="Lin Y."/>
            <person name="Phelan M."/>
            <person name="Farmer A."/>
        </authorList>
    </citation>
    <scope>NUCLEOTIDE SEQUENCE [LARGE SCALE MRNA]</scope>
</reference>
<reference key="5">
    <citation type="submission" date="2005-11" db="EMBL/GenBank/DDBJ databases">
        <authorList>
            <consortium name="NIEHS SNPs program"/>
        </authorList>
    </citation>
    <scope>NUCLEOTIDE SEQUENCE [GENOMIC DNA]</scope>
    <scope>VARIANT VAL-76</scope>
</reference>
<reference key="6">
    <citation type="journal article" date="2006" name="Nature">
        <title>DNA sequence and analysis of human chromosome 8.</title>
        <authorList>
            <person name="Nusbaum C."/>
            <person name="Mikkelsen T.S."/>
            <person name="Zody M.C."/>
            <person name="Asakawa S."/>
            <person name="Taudien S."/>
            <person name="Garber M."/>
            <person name="Kodira C.D."/>
            <person name="Schueler M.G."/>
            <person name="Shimizu A."/>
            <person name="Whittaker C.A."/>
            <person name="Chang J.L."/>
            <person name="Cuomo C.A."/>
            <person name="Dewar K."/>
            <person name="FitzGerald M.G."/>
            <person name="Yang X."/>
            <person name="Allen N.R."/>
            <person name="Anderson S."/>
            <person name="Asakawa T."/>
            <person name="Blechschmidt K."/>
            <person name="Bloom T."/>
            <person name="Borowsky M.L."/>
            <person name="Butler J."/>
            <person name="Cook A."/>
            <person name="Corum B."/>
            <person name="DeArellano K."/>
            <person name="DeCaprio D."/>
            <person name="Dooley K.T."/>
            <person name="Dorris L. III"/>
            <person name="Engels R."/>
            <person name="Gloeckner G."/>
            <person name="Hafez N."/>
            <person name="Hagopian D.S."/>
            <person name="Hall J.L."/>
            <person name="Ishikawa S.K."/>
            <person name="Jaffe D.B."/>
            <person name="Kamat A."/>
            <person name="Kudoh J."/>
            <person name="Lehmann R."/>
            <person name="Lokitsang T."/>
            <person name="Macdonald P."/>
            <person name="Major J.E."/>
            <person name="Matthews C.D."/>
            <person name="Mauceli E."/>
            <person name="Menzel U."/>
            <person name="Mihalev A.H."/>
            <person name="Minoshima S."/>
            <person name="Murayama Y."/>
            <person name="Naylor J.W."/>
            <person name="Nicol R."/>
            <person name="Nguyen C."/>
            <person name="O'Leary S.B."/>
            <person name="O'Neill K."/>
            <person name="Parker S.C.J."/>
            <person name="Polley A."/>
            <person name="Raymond C.K."/>
            <person name="Reichwald K."/>
            <person name="Rodriguez J."/>
            <person name="Sasaki T."/>
            <person name="Schilhabel M."/>
            <person name="Siddiqui R."/>
            <person name="Smith C.L."/>
            <person name="Sneddon T.P."/>
            <person name="Talamas J.A."/>
            <person name="Tenzin P."/>
            <person name="Topham K."/>
            <person name="Venkataraman V."/>
            <person name="Wen G."/>
            <person name="Yamazaki S."/>
            <person name="Young S.K."/>
            <person name="Zeng Q."/>
            <person name="Zimmer A.R."/>
            <person name="Rosenthal A."/>
            <person name="Birren B.W."/>
            <person name="Platzer M."/>
            <person name="Shimizu N."/>
            <person name="Lander E.S."/>
        </authorList>
    </citation>
    <scope>NUCLEOTIDE SEQUENCE [LARGE SCALE GENOMIC DNA]</scope>
</reference>
<reference key="7">
    <citation type="journal article" date="2004" name="Genome Res.">
        <title>The status, quality, and expansion of the NIH full-length cDNA project: the Mammalian Gene Collection (MGC).</title>
        <authorList>
            <consortium name="The MGC Project Team"/>
        </authorList>
    </citation>
    <scope>NUCLEOTIDE SEQUENCE [LARGE SCALE MRNA]</scope>
    <scope>VARIANT VAL-76</scope>
    <source>
        <tissue>Brain</tissue>
        <tissue>Lung</tissue>
        <tissue>Skin</tissue>
    </source>
</reference>
<reference key="8">
    <citation type="journal article" date="1987" name="Biochem. Biophys. Res. Commun.">
        <title>Isolation of a cDNA clone for human cytochrome c1 from a lambda gt11 expression library.</title>
        <authorList>
            <person name="Nishikimi M."/>
            <person name="Suzuki H."/>
            <person name="Ohta S."/>
            <person name="Sakurai T."/>
            <person name="Shimomura Y."/>
            <person name="Tanaka M."/>
            <person name="Kagawa Y."/>
            <person name="Ozawa T."/>
        </authorList>
    </citation>
    <scope>NUCLEOTIDE SEQUENCE [MRNA] OF 99-325</scope>
</reference>
<reference key="9">
    <citation type="journal article" date="2011" name="BMC Syst. Biol.">
        <title>Initial characterization of the human central proteome.</title>
        <authorList>
            <person name="Burkard T.R."/>
            <person name="Planyavsky M."/>
            <person name="Kaupe I."/>
            <person name="Breitwieser F.P."/>
            <person name="Buerckstuemmer T."/>
            <person name="Bennett K.L."/>
            <person name="Superti-Furga G."/>
            <person name="Colinge J."/>
        </authorList>
    </citation>
    <scope>IDENTIFICATION BY MASS SPECTROMETRY [LARGE SCALE ANALYSIS]</scope>
</reference>
<reference key="10">
    <citation type="journal article" date="2013" name="J. Proteome Res.">
        <title>Toward a comprehensive characterization of a human cancer cell phosphoproteome.</title>
        <authorList>
            <person name="Zhou H."/>
            <person name="Di Palma S."/>
            <person name="Preisinger C."/>
            <person name="Peng M."/>
            <person name="Polat A.N."/>
            <person name="Heck A.J."/>
            <person name="Mohammed S."/>
        </authorList>
    </citation>
    <scope>PHOSPHORYLATION [LARGE SCALE ANALYSIS] AT SER-182</scope>
    <scope>IDENTIFICATION BY MASS SPECTROMETRY [LARGE SCALE ANALYSIS]</scope>
    <source>
        <tissue>Erythroleukemia</tissue>
    </source>
</reference>
<reference key="11">
    <citation type="journal article" date="2014" name="J. Proteomics">
        <title>An enzyme assisted RP-RPLC approach for in-depth analysis of human liver phosphoproteome.</title>
        <authorList>
            <person name="Bian Y."/>
            <person name="Song C."/>
            <person name="Cheng K."/>
            <person name="Dong M."/>
            <person name="Wang F."/>
            <person name="Huang J."/>
            <person name="Sun D."/>
            <person name="Wang L."/>
            <person name="Ye M."/>
            <person name="Zou H."/>
        </authorList>
    </citation>
    <scope>IDENTIFICATION BY MASS SPECTROMETRY [LARGE SCALE ANALYSIS]</scope>
    <source>
        <tissue>Liver</tissue>
    </source>
</reference>
<reference key="12">
    <citation type="journal article" date="2015" name="Proteomics">
        <title>N-terminome analysis of the human mitochondrial proteome.</title>
        <authorList>
            <person name="Vaca Jacome A.S."/>
            <person name="Rabilloud T."/>
            <person name="Schaeffer-Reiss C."/>
            <person name="Rompais M."/>
            <person name="Ayoub D."/>
            <person name="Lane L."/>
            <person name="Bairoch A."/>
            <person name="Van Dorsselaer A."/>
            <person name="Carapito C."/>
        </authorList>
    </citation>
    <scope>CLEAVAGE OF TRANSIT PEPTIDE [LARGE SCALE ANALYSIS] AFTER ALA-84</scope>
    <scope>IDENTIFICATION BY MASS SPECTROMETRY [LARGE SCALE ANALYSIS]</scope>
</reference>
<reference key="13">
    <citation type="journal article" date="2017" name="Cell">
        <title>Architecture of human mitochondrial respiratory megacomplex I2III2IV2.</title>
        <authorList>
            <person name="Guo R."/>
            <person name="Zong S."/>
            <person name="Wu M."/>
            <person name="Gu J."/>
            <person name="Yang M."/>
        </authorList>
    </citation>
    <scope>STRUCTURE BY ELECTRON MICROSCOPY (3.40 ANGSTROMS)</scope>
    <scope>SUBUNIT</scope>
</reference>
<reference key="14">
    <citation type="journal article" date="1999" name="Hum. Genet.">
        <title>A mitochondrial cytochrome b mutation but no mutations of nuclearly encoded subunits in ubiquinol cytochrome c reductase (complex III) deficiency.</title>
        <authorList>
            <person name="Valnot I."/>
            <person name="Kassis J."/>
            <person name="Chretien D."/>
            <person name="de Lonlay P."/>
            <person name="Parfait B."/>
            <person name="Munnich A."/>
            <person name="Kachaner J."/>
            <person name="Rustin P."/>
            <person name="Roetig A."/>
        </authorList>
    </citation>
    <scope>VARIANT VAL-89</scope>
</reference>
<reference key="15">
    <citation type="journal article" date="2013" name="Am. J. Hum. Genet.">
        <title>Mutations in CYC1, encoding cytochrome c1 subunit of respiratory chain complex III, cause insulin-responsive hyperglycemia.</title>
        <authorList>
            <person name="Gaignard P."/>
            <person name="Menezes M."/>
            <person name="Schiff M."/>
            <person name="Bayot A."/>
            <person name="Rak M."/>
            <person name="Ogier de Baulny H."/>
            <person name="Su C.H."/>
            <person name="Gilleron M."/>
            <person name="Lombes A."/>
            <person name="Abida H."/>
            <person name="Tzagoloff A."/>
            <person name="Riley L."/>
            <person name="Cooper S.T."/>
            <person name="Mina K."/>
            <person name="Sivadorai P."/>
            <person name="Davis M.R."/>
            <person name="Allcock R.J."/>
            <person name="Kresoje N."/>
            <person name="Laing N.G."/>
            <person name="Thorburn D.R."/>
            <person name="Slama A."/>
            <person name="Christodoulou J."/>
            <person name="Rustin P."/>
        </authorList>
    </citation>
    <scope>VARIANTS MC3DN6 CYS-96 AND PHE-215</scope>
</reference>
<gene>
    <name type="primary">CYC1</name>
</gene>
<evidence type="ECO:0000250" key="1">
    <source>
        <dbReference type="UniProtKB" id="P00125"/>
    </source>
</evidence>
<evidence type="ECO:0000250" key="2">
    <source>
        <dbReference type="UniProtKB" id="P07143"/>
    </source>
</evidence>
<evidence type="ECO:0000250" key="3">
    <source>
        <dbReference type="UniProtKB" id="Q9D0M3"/>
    </source>
</evidence>
<evidence type="ECO:0000255" key="4">
    <source>
        <dbReference type="PROSITE-ProRule" id="PRU00433"/>
    </source>
</evidence>
<evidence type="ECO:0000269" key="5">
    <source>
    </source>
</evidence>
<evidence type="ECO:0000269" key="6">
    <source>
    </source>
</evidence>
<evidence type="ECO:0000269" key="7">
    <source>
    </source>
</evidence>
<evidence type="ECO:0000269" key="8">
    <source>
    </source>
</evidence>
<evidence type="ECO:0000269" key="9">
    <source>
    </source>
</evidence>
<evidence type="ECO:0000269" key="10">
    <source>
    </source>
</evidence>
<evidence type="ECO:0000269" key="11">
    <source ref="3"/>
</evidence>
<evidence type="ECO:0000269" key="12">
    <source ref="5"/>
</evidence>
<evidence type="ECO:0000305" key="13"/>
<evidence type="ECO:0007744" key="14">
    <source>
        <dbReference type="PDB" id="5XTE"/>
    </source>
</evidence>
<evidence type="ECO:0007744" key="15">
    <source>
        <dbReference type="PDB" id="5XTH"/>
    </source>
</evidence>
<evidence type="ECO:0007744" key="16">
    <source>
    </source>
</evidence>
<evidence type="ECO:0007744" key="17">
    <source>
    </source>
</evidence>
<evidence type="ECO:0007829" key="18">
    <source>
        <dbReference type="PDB" id="5XTE"/>
    </source>
</evidence>
<sequence>MAAAAASLRGVVLGPRGAGLPGARARGLLCSARPGQLPLRTPQAVALSSKSGLSRGRKVMLSALGMLAAGGAGLAMALHSAVSASDLELHPPSYPWSHRGLLSSLDHTSIRRGFQVYKQVCASCHSMDFVAYRHLVGVCYTEDEAKELAAEVEVQDGPNEDGEMFMRPGKLFDYFPKPYPNSEAARAANNGALPPDLSYIVRARHGGEDYVFSLLTGYCEPPTGVSLREGLYFNPYFPGQAIAMAPPIYTDVLEFDDGTPATMSQIAKDVCTFLRWASEPEHDHRKRMGLKMLMMMALLVPLVYTIKRHKWSVLKSRKLAYRPPK</sequence>
<keyword id="KW-0002">3D-structure</keyword>
<keyword id="KW-0225">Disease variant</keyword>
<keyword id="KW-0249">Electron transport</keyword>
<keyword id="KW-0349">Heme</keyword>
<keyword id="KW-0408">Iron</keyword>
<keyword id="KW-0472">Membrane</keyword>
<keyword id="KW-0479">Metal-binding</keyword>
<keyword id="KW-0496">Mitochondrion</keyword>
<keyword id="KW-0999">Mitochondrion inner membrane</keyword>
<keyword id="KW-0597">Phosphoprotein</keyword>
<keyword id="KW-1274">Primary mitochondrial disease</keyword>
<keyword id="KW-1267">Proteomics identification</keyword>
<keyword id="KW-1185">Reference proteome</keyword>
<keyword id="KW-0679">Respiratory chain</keyword>
<keyword id="KW-0809">Transit peptide</keyword>
<keyword id="KW-1278">Translocase</keyword>
<keyword id="KW-0812">Transmembrane</keyword>
<keyword id="KW-1133">Transmembrane helix</keyword>
<keyword id="KW-0813">Transport</keyword>
<feature type="transit peptide" description="Mitochondrion" evidence="17">
    <location>
        <begin position="1"/>
        <end position="84"/>
    </location>
</feature>
<feature type="chain" id="PRO_0000006554" description="Cytochrome c1, heme protein, mitochondrial">
    <location>
        <begin position="85"/>
        <end position="325"/>
    </location>
</feature>
<feature type="topological domain" description="Mitochondrial intermembrane" evidence="10">
    <location>
        <begin position="85"/>
        <end position="281"/>
    </location>
</feature>
<feature type="transmembrane region" description="Helical" evidence="10">
    <location>
        <begin position="282"/>
        <end position="315"/>
    </location>
</feature>
<feature type="topological domain" description="Mitochondrial matrix" evidence="10">
    <location>
        <begin position="316"/>
        <end position="325"/>
    </location>
</feature>
<feature type="domain" description="Cytochrome c" evidence="4">
    <location>
        <begin position="108"/>
        <end position="209"/>
    </location>
</feature>
<feature type="binding site" description="covalent" evidence="1">
    <location>
        <position position="121"/>
    </location>
    <ligand>
        <name>heme c</name>
        <dbReference type="ChEBI" id="CHEBI:61717"/>
    </ligand>
</feature>
<feature type="binding site" description="covalent" evidence="1">
    <location>
        <position position="124"/>
    </location>
    <ligand>
        <name>heme c</name>
        <dbReference type="ChEBI" id="CHEBI:61717"/>
    </ligand>
</feature>
<feature type="binding site" description="axial binding residue" evidence="10 14 15">
    <location>
        <position position="125"/>
    </location>
    <ligand>
        <name>heme c</name>
        <dbReference type="ChEBI" id="CHEBI:61717"/>
    </ligand>
    <ligandPart>
        <name>Fe</name>
        <dbReference type="ChEBI" id="CHEBI:18248"/>
    </ligandPart>
</feature>
<feature type="binding site" description="axial binding residue" evidence="10 15">
    <location>
        <position position="244"/>
    </location>
    <ligand>
        <name>heme c</name>
        <dbReference type="ChEBI" id="CHEBI:61717"/>
    </ligand>
    <ligandPart>
        <name>Fe</name>
        <dbReference type="ChEBI" id="CHEBI:18248"/>
    </ligandPart>
</feature>
<feature type="modified residue" description="Phosphoserine" evidence="16">
    <location>
        <position position="182"/>
    </location>
</feature>
<feature type="sequence variant" id="VAR_025163" description="In dbSNP:rs7820984." evidence="6 8 9 11 12">
    <original>M</original>
    <variation>V</variation>
    <location>
        <position position="76"/>
    </location>
</feature>
<feature type="sequence variant" id="VAR_013631" evidence="5 9">
    <original>L</original>
    <variation>V</variation>
    <location>
        <position position="89"/>
    </location>
</feature>
<feature type="sequence variant" id="VAR_070847" description="In MC3DN6; dbSNP:rs587777041." evidence="7">
    <original>W</original>
    <variation>C</variation>
    <location>
        <position position="96"/>
    </location>
</feature>
<feature type="sequence variant" id="VAR_070848" description="In MC3DN6; dbSNP:rs587777042." evidence="7">
    <original>L</original>
    <variation>F</variation>
    <location>
        <position position="215"/>
    </location>
</feature>
<feature type="helix" evidence="18">
    <location>
        <begin position="97"/>
        <end position="99"/>
    </location>
</feature>
<feature type="strand" evidence="18">
    <location>
        <begin position="100"/>
        <end position="102"/>
    </location>
</feature>
<feature type="helix" evidence="18">
    <location>
        <begin position="107"/>
        <end position="117"/>
    </location>
</feature>
<feature type="turn" evidence="18">
    <location>
        <begin position="118"/>
        <end position="123"/>
    </location>
</feature>
<feature type="strand" evidence="18">
    <location>
        <begin position="131"/>
        <end position="134"/>
    </location>
</feature>
<feature type="helix" evidence="18">
    <location>
        <begin position="135"/>
        <end position="138"/>
    </location>
</feature>
<feature type="helix" evidence="18">
    <location>
        <begin position="142"/>
        <end position="149"/>
    </location>
</feature>
<feature type="strand" evidence="18">
    <location>
        <begin position="159"/>
        <end position="162"/>
    </location>
</feature>
<feature type="strand" evidence="18">
    <location>
        <begin position="178"/>
        <end position="181"/>
    </location>
</feature>
<feature type="helix" evidence="18">
    <location>
        <begin position="182"/>
        <end position="187"/>
    </location>
</feature>
<feature type="turn" evidence="18">
    <location>
        <begin position="188"/>
        <end position="191"/>
    </location>
</feature>
<feature type="helix" evidence="18">
    <location>
        <begin position="200"/>
        <end position="203"/>
    </location>
</feature>
<feature type="turn" evidence="18">
    <location>
        <begin position="205"/>
        <end position="207"/>
    </location>
</feature>
<feature type="helix" evidence="18">
    <location>
        <begin position="208"/>
        <end position="216"/>
    </location>
</feature>
<feature type="strand" evidence="18">
    <location>
        <begin position="242"/>
        <end position="244"/>
    </location>
</feature>
<feature type="helix" evidence="18">
    <location>
        <begin position="263"/>
        <end position="278"/>
    </location>
</feature>
<feature type="helix" evidence="18">
    <location>
        <begin position="282"/>
        <end position="315"/>
    </location>
</feature>
<dbReference type="EC" id="7.1.1.8"/>
<dbReference type="EMBL" id="M16597">
    <property type="protein sequence ID" value="AAA35730.1"/>
    <property type="molecule type" value="mRNA"/>
</dbReference>
<dbReference type="EMBL" id="J04444">
    <property type="protein sequence ID" value="AAA52135.1"/>
    <property type="molecule type" value="Genomic_DNA"/>
</dbReference>
<dbReference type="EMBL" id="CR541674">
    <property type="protein sequence ID" value="CAG46475.1"/>
    <property type="molecule type" value="mRNA"/>
</dbReference>
<dbReference type="EMBL" id="BT019798">
    <property type="protein sequence ID" value="AAV38601.1"/>
    <property type="molecule type" value="mRNA"/>
</dbReference>
<dbReference type="EMBL" id="DQ300360">
    <property type="protein sequence ID" value="ABB96244.1"/>
    <property type="molecule type" value="Genomic_DNA"/>
</dbReference>
<dbReference type="EMBL" id="AC104592">
    <property type="status" value="NOT_ANNOTATED_CDS"/>
    <property type="molecule type" value="Genomic_DNA"/>
</dbReference>
<dbReference type="EMBL" id="BC001006">
    <property type="protein sequence ID" value="AAH01006.1"/>
    <property type="molecule type" value="mRNA"/>
</dbReference>
<dbReference type="EMBL" id="BC015616">
    <property type="protein sequence ID" value="AAH15616.1"/>
    <property type="molecule type" value="mRNA"/>
</dbReference>
<dbReference type="EMBL" id="BC020566">
    <property type="protein sequence ID" value="AAH20566.1"/>
    <property type="molecule type" value="mRNA"/>
</dbReference>
<dbReference type="EMBL" id="X06994">
    <property type="protein sequence ID" value="CAA30052.1"/>
    <property type="molecule type" value="mRNA"/>
</dbReference>
<dbReference type="CCDS" id="CCDS6415.1"/>
<dbReference type="PIR" id="A31481">
    <property type="entry name" value="S00680"/>
</dbReference>
<dbReference type="RefSeq" id="NP_001907.2">
    <property type="nucleotide sequence ID" value="NM_001916.4"/>
</dbReference>
<dbReference type="PDB" id="5XTE">
    <property type="method" value="EM"/>
    <property type="resolution" value="3.40 A"/>
    <property type="chains" value="H/U=85-325"/>
</dbReference>
<dbReference type="PDB" id="5XTH">
    <property type="method" value="EM"/>
    <property type="resolution" value="3.90 A"/>
    <property type="chains" value="AH/AU=85-325"/>
</dbReference>
<dbReference type="PDB" id="5XTI">
    <property type="method" value="EM"/>
    <property type="resolution" value="17.40 A"/>
    <property type="chains" value="AH/AU=85-325"/>
</dbReference>
<dbReference type="PDBsum" id="5XTE"/>
<dbReference type="PDBsum" id="5XTH"/>
<dbReference type="PDBsum" id="5XTI"/>
<dbReference type="SMR" id="P08574"/>
<dbReference type="BioGRID" id="107917">
    <property type="interactions" value="237"/>
</dbReference>
<dbReference type="ComplexPortal" id="CPX-560">
    <property type="entry name" value="Mitochondrial respiratory chain complex III"/>
</dbReference>
<dbReference type="FunCoup" id="P08574">
    <property type="interactions" value="2200"/>
</dbReference>
<dbReference type="IntAct" id="P08574">
    <property type="interactions" value="53"/>
</dbReference>
<dbReference type="MINT" id="P08574"/>
<dbReference type="STRING" id="9606.ENSP00000317159"/>
<dbReference type="ChEMBL" id="CHEMBL4105975"/>
<dbReference type="DrugBank" id="DB07763">
    <property type="generic name" value="(5S)-3-ANILINO-5-(2,4-DIFLUOROPHENYL)-5-METHYL-1,3-OXAZOLIDINE-2,4-DIONE"/>
</dbReference>
<dbReference type="DrugBank" id="DB07778">
    <property type="generic name" value="(S)-famoxadone"/>
</dbReference>
<dbReference type="DrugBank" id="DB04141">
    <property type="generic name" value="2-Hexyloxy-6-Hydroxymethyl-Tetrahydro-Pyran-3,4,5-Triol"/>
</dbReference>
<dbReference type="DrugBank" id="DB08453">
    <property type="generic name" value="2-Nonyl-4-quinolinol 1-oxide"/>
</dbReference>
<dbReference type="DrugBank" id="DB07636">
    <property type="generic name" value="5-Heptyl-6-hydroxy-1,3-benzothiazole-4,7-dione"/>
</dbReference>
<dbReference type="DrugBank" id="DB04799">
    <property type="generic name" value="6-Hydroxy-5-undecyl-4,7-benzothiazoledione"/>
</dbReference>
<dbReference type="DrugBank" id="DB07401">
    <property type="generic name" value="Azoxystrobin"/>
</dbReference>
<dbReference type="DrugBank" id="DB08330">
    <property type="generic name" value="METHYL (2Z)-3-METHOXY-2-{2-[(E)-2-PHENYLVINYL]PHENYL}ACRYLATE"/>
</dbReference>
<dbReference type="DrugBank" id="DB08690">
    <property type="generic name" value="Ubiquinone Q2"/>
</dbReference>
<dbReference type="DrugCentral" id="P08574"/>
<dbReference type="GlyGen" id="P08574">
    <property type="glycosylation" value="1 site, 1 O-linked glycan (1 site)"/>
</dbReference>
<dbReference type="iPTMnet" id="P08574"/>
<dbReference type="PhosphoSitePlus" id="P08574"/>
<dbReference type="SwissPalm" id="P08574"/>
<dbReference type="BioMuta" id="CYC1"/>
<dbReference type="DMDM" id="311033458"/>
<dbReference type="CPTAC" id="CPTAC-490"/>
<dbReference type="CPTAC" id="CPTAC-491"/>
<dbReference type="jPOST" id="P08574"/>
<dbReference type="MassIVE" id="P08574"/>
<dbReference type="PaxDb" id="9606-ENSP00000317159"/>
<dbReference type="PeptideAtlas" id="P08574"/>
<dbReference type="PRIDE" id="P08574"/>
<dbReference type="ProteomicsDB" id="52124"/>
<dbReference type="Pumba" id="P08574"/>
<dbReference type="TopDownProteomics" id="P08574"/>
<dbReference type="Antibodypedia" id="810">
    <property type="antibodies" value="390 antibodies from 33 providers"/>
</dbReference>
<dbReference type="DNASU" id="1537"/>
<dbReference type="Ensembl" id="ENST00000318911.5">
    <property type="protein sequence ID" value="ENSP00000317159.4"/>
    <property type="gene ID" value="ENSG00000179091.5"/>
</dbReference>
<dbReference type="GeneID" id="1537"/>
<dbReference type="KEGG" id="hsa:1537"/>
<dbReference type="MANE-Select" id="ENST00000318911.5">
    <property type="protein sequence ID" value="ENSP00000317159.4"/>
    <property type="RefSeq nucleotide sequence ID" value="NM_001916.5"/>
    <property type="RefSeq protein sequence ID" value="NP_001907.3"/>
</dbReference>
<dbReference type="UCSC" id="uc003zaz.6">
    <property type="organism name" value="human"/>
</dbReference>
<dbReference type="AGR" id="HGNC:2579"/>
<dbReference type="CTD" id="1537"/>
<dbReference type="DisGeNET" id="1537"/>
<dbReference type="GeneCards" id="CYC1"/>
<dbReference type="HGNC" id="HGNC:2579">
    <property type="gene designation" value="CYC1"/>
</dbReference>
<dbReference type="HPA" id="ENSG00000179091">
    <property type="expression patterns" value="Tissue enhanced (skeletal muscle, tongue)"/>
</dbReference>
<dbReference type="MalaCards" id="CYC1"/>
<dbReference type="MIM" id="123980">
    <property type="type" value="gene"/>
</dbReference>
<dbReference type="MIM" id="615453">
    <property type="type" value="phenotype"/>
</dbReference>
<dbReference type="neXtProt" id="NX_P08574"/>
<dbReference type="OpenTargets" id="ENSG00000179091"/>
<dbReference type="Orphanet" id="1460">
    <property type="disease" value="Isolated complex III deficiency"/>
</dbReference>
<dbReference type="PharmGKB" id="PA27077"/>
<dbReference type="VEuPathDB" id="HostDB:ENSG00000179091"/>
<dbReference type="eggNOG" id="KOG3052">
    <property type="taxonomic scope" value="Eukaryota"/>
</dbReference>
<dbReference type="GeneTree" id="ENSGT00390000012445"/>
<dbReference type="HOGENOM" id="CLU_040334_1_0_1"/>
<dbReference type="InParanoid" id="P08574"/>
<dbReference type="OMA" id="WVKKFKW"/>
<dbReference type="OrthoDB" id="5925at2759"/>
<dbReference type="PAN-GO" id="P08574">
    <property type="GO annotations" value="2 GO annotations based on evolutionary models"/>
</dbReference>
<dbReference type="PhylomeDB" id="P08574"/>
<dbReference type="TreeFam" id="TF314799"/>
<dbReference type="BioCyc" id="MetaCyc:HS11349-MONOMER"/>
<dbReference type="PathwayCommons" id="P08574"/>
<dbReference type="Reactome" id="R-HSA-1268020">
    <property type="pathway name" value="Mitochondrial protein import"/>
</dbReference>
<dbReference type="Reactome" id="R-HSA-611105">
    <property type="pathway name" value="Respiratory electron transport"/>
</dbReference>
<dbReference type="Reactome" id="R-HSA-9865881">
    <property type="pathway name" value="Complex III assembly"/>
</dbReference>
<dbReference type="SignaLink" id="P08574"/>
<dbReference type="SIGNOR" id="P08574"/>
<dbReference type="BioGRID-ORCS" id="1537">
    <property type="hits" value="415 hits in 1167 CRISPR screens"/>
</dbReference>
<dbReference type="CD-CODE" id="91857CE7">
    <property type="entry name" value="Nucleolus"/>
</dbReference>
<dbReference type="ChiTaRS" id="CYC1">
    <property type="organism name" value="human"/>
</dbReference>
<dbReference type="GeneWiki" id="CYC1"/>
<dbReference type="GenomeRNAi" id="1537"/>
<dbReference type="Pharos" id="P08574">
    <property type="development level" value="Tchem"/>
</dbReference>
<dbReference type="PRO" id="PR:P08574"/>
<dbReference type="Proteomes" id="UP000005640">
    <property type="component" value="Chromosome 8"/>
</dbReference>
<dbReference type="RNAct" id="P08574">
    <property type="molecule type" value="protein"/>
</dbReference>
<dbReference type="Bgee" id="ENSG00000179091">
    <property type="expression patterns" value="Expressed in apex of heart and 200 other cell types or tissues"/>
</dbReference>
<dbReference type="GO" id="GO:0016020">
    <property type="term" value="C:membrane"/>
    <property type="evidence" value="ECO:0007005"/>
    <property type="project" value="UniProtKB"/>
</dbReference>
<dbReference type="GO" id="GO:0005743">
    <property type="term" value="C:mitochondrial inner membrane"/>
    <property type="evidence" value="ECO:0000314"/>
    <property type="project" value="ComplexPortal"/>
</dbReference>
<dbReference type="GO" id="GO:0005739">
    <property type="term" value="C:mitochondrion"/>
    <property type="evidence" value="ECO:0007005"/>
    <property type="project" value="UniProtKB"/>
</dbReference>
<dbReference type="GO" id="GO:0005634">
    <property type="term" value="C:nucleus"/>
    <property type="evidence" value="ECO:0007005"/>
    <property type="project" value="UniProtKB"/>
</dbReference>
<dbReference type="GO" id="GO:0045275">
    <property type="term" value="C:respiratory chain complex III"/>
    <property type="evidence" value="ECO:0000318"/>
    <property type="project" value="GO_Central"/>
</dbReference>
<dbReference type="GO" id="GO:0020037">
    <property type="term" value="F:heme binding"/>
    <property type="evidence" value="ECO:0007669"/>
    <property type="project" value="InterPro"/>
</dbReference>
<dbReference type="GO" id="GO:0046872">
    <property type="term" value="F:metal ion binding"/>
    <property type="evidence" value="ECO:0007669"/>
    <property type="project" value="UniProtKB-KW"/>
</dbReference>
<dbReference type="GO" id="GO:0008121">
    <property type="term" value="F:ubiquinol-cytochrome-c reductase activity"/>
    <property type="evidence" value="ECO:0007669"/>
    <property type="project" value="UniProtKB-EC"/>
</dbReference>
<dbReference type="GO" id="GO:0045333">
    <property type="term" value="P:cellular respiration"/>
    <property type="evidence" value="ECO:0000303"/>
    <property type="project" value="ComplexPortal"/>
</dbReference>
<dbReference type="GO" id="GO:0006122">
    <property type="term" value="P:mitochondrial electron transport, ubiquinol to cytochrome c"/>
    <property type="evidence" value="ECO:0000318"/>
    <property type="project" value="GO_Central"/>
</dbReference>
<dbReference type="GO" id="GO:0033762">
    <property type="term" value="P:response to glucagon"/>
    <property type="evidence" value="ECO:0007669"/>
    <property type="project" value="Ensembl"/>
</dbReference>
<dbReference type="FunFam" id="1.10.760.10:FF:000002">
    <property type="entry name" value="Cytochrome c1, heme protein"/>
    <property type="match status" value="1"/>
</dbReference>
<dbReference type="FunFam" id="1.20.5.100:FF:000003">
    <property type="entry name" value="Cytochrome c1, heme protein, mitochondrial"/>
    <property type="match status" value="1"/>
</dbReference>
<dbReference type="Gene3D" id="1.10.760.10">
    <property type="entry name" value="Cytochrome c-like domain"/>
    <property type="match status" value="1"/>
</dbReference>
<dbReference type="Gene3D" id="1.20.5.100">
    <property type="entry name" value="Cytochrome c1, transmembrane anchor, C-terminal"/>
    <property type="match status" value="1"/>
</dbReference>
<dbReference type="InterPro" id="IPR036909">
    <property type="entry name" value="Cyt_c-like_dom_sf"/>
</dbReference>
<dbReference type="InterPro" id="IPR002326">
    <property type="entry name" value="Cyt_c1"/>
</dbReference>
<dbReference type="InterPro" id="IPR021157">
    <property type="entry name" value="Cyt_c1_TM_anchor_C"/>
</dbReference>
<dbReference type="PANTHER" id="PTHR10266">
    <property type="entry name" value="CYTOCHROME C1"/>
    <property type="match status" value="1"/>
</dbReference>
<dbReference type="PANTHER" id="PTHR10266:SF3">
    <property type="entry name" value="CYTOCHROME C1, HEME PROTEIN, MITOCHONDRIAL"/>
    <property type="match status" value="1"/>
</dbReference>
<dbReference type="Pfam" id="PF02167">
    <property type="entry name" value="Cytochrom_C1"/>
    <property type="match status" value="1"/>
</dbReference>
<dbReference type="PRINTS" id="PR00603">
    <property type="entry name" value="CYTOCHROMEC1"/>
</dbReference>
<dbReference type="SUPFAM" id="SSF46626">
    <property type="entry name" value="Cytochrome c"/>
    <property type="match status" value="1"/>
</dbReference>
<dbReference type="SUPFAM" id="SSF81496">
    <property type="entry name" value="Cytochrome c1 subunit of cytochrome bc1 complex (Ubiquinol-cytochrome c reductase), transmembrane anchor"/>
    <property type="match status" value="1"/>
</dbReference>
<protein>
    <recommendedName>
        <fullName>Cytochrome c1, heme protein, mitochondrial</fullName>
        <ecNumber>7.1.1.8</ecNumber>
    </recommendedName>
    <alternativeName>
        <fullName>Complex III subunit 4</fullName>
    </alternativeName>
    <alternativeName>
        <fullName>Complex III subunit IV</fullName>
    </alternativeName>
    <alternativeName>
        <fullName>Cytochrome b-c1 complex subunit 4</fullName>
    </alternativeName>
    <alternativeName>
        <fullName>Ubiquinol-cytochrome-c reductase complex cytochrome c1 subunit</fullName>
        <shortName>Cytochrome c-1</shortName>
    </alternativeName>
</protein>
<organism>
    <name type="scientific">Homo sapiens</name>
    <name type="common">Human</name>
    <dbReference type="NCBI Taxonomy" id="9606"/>
    <lineage>
        <taxon>Eukaryota</taxon>
        <taxon>Metazoa</taxon>
        <taxon>Chordata</taxon>
        <taxon>Craniata</taxon>
        <taxon>Vertebrata</taxon>
        <taxon>Euteleostomi</taxon>
        <taxon>Mammalia</taxon>
        <taxon>Eutheria</taxon>
        <taxon>Euarchontoglires</taxon>
        <taxon>Primates</taxon>
        <taxon>Haplorrhini</taxon>
        <taxon>Catarrhini</taxon>
        <taxon>Hominidae</taxon>
        <taxon>Homo</taxon>
    </lineage>
</organism>
<comment type="function">
    <text evidence="2">Component of the ubiquinol-cytochrome c oxidoreductase, a multisubunit transmembrane complex that is part of the mitochondrial electron transport chain which drives oxidative phosphorylation. The respiratory chain contains 3 multisubunit complexes succinate dehydrogenase (complex II, CII), ubiquinol-cytochrome c oxidoreductase (cytochrome b-c1 complex, complex III, CIII) and cytochrome c oxidase (complex IV, CIV), that cooperate to transfer electrons derived from NADH and succinate to molecular oxygen, creating an electrochemical gradient over the inner membrane that drives transmembrane transport and the ATP synthase. The cytochrome b-c1 complex catalyzes electron transfer from ubiquinol to cytochrome c, linking this redox reaction to translocation of protons across the mitochondrial inner membrane, with protons being carried across the membrane as hydrogens on the quinol. In the process called Q cycle, 2 protons are consumed from the matrix, 4 protons are released into the intermembrane space and 2 electrons are passed to cytochrome c. Cytochrome c1 is a catalytic core subunit containing a c-type heme. It transfers electrons from the [2Fe-2S] iron-sulfur cluster of the Rieske protein to cytochrome c.</text>
</comment>
<comment type="catalytic activity">
    <reaction evidence="2">
        <text>a quinol + 2 Fe(III)-[cytochrome c](out) = a quinone + 2 Fe(II)-[cytochrome c](out) + 2 H(+)(out)</text>
        <dbReference type="Rhea" id="RHEA:11484"/>
        <dbReference type="Rhea" id="RHEA-COMP:10350"/>
        <dbReference type="Rhea" id="RHEA-COMP:14399"/>
        <dbReference type="ChEBI" id="CHEBI:15378"/>
        <dbReference type="ChEBI" id="CHEBI:24646"/>
        <dbReference type="ChEBI" id="CHEBI:29033"/>
        <dbReference type="ChEBI" id="CHEBI:29034"/>
        <dbReference type="ChEBI" id="CHEBI:132124"/>
        <dbReference type="EC" id="7.1.1.8"/>
    </reaction>
</comment>
<comment type="cofactor">
    <cofactor evidence="10">
        <name>heme c</name>
        <dbReference type="ChEBI" id="CHEBI:61717"/>
    </cofactor>
    <text evidence="10">Binds 1 heme c group covalently per subunit.</text>
</comment>
<comment type="subunit">
    <text evidence="1 3 10">Component of the ubiquinol-cytochrome c oxidoreductase (cytochrome b-c1 complex, complex III, CIII), a multisubunit enzyme composed of 11 subunits. The complex is composed of 3 respiratory subunits cytochrome b, cytochrome c1 and Rieske protein UQCRFS1, 2 core protein subunits UQCRC1/QCR1 and UQCRC2/QCR2, and 6 low-molecular weight protein subunits UQCRH/QCR6, UQCRB/QCR7, UQCRQ/QCR8, UQCR10/QCR9, UQCR11/QCR10 and subunit 9, the cleavage product of Rieske protein UQCRFS1 (By similarity). The complex exists as an obligatory dimer and forms supercomplexes (SCs) in the inner mitochondrial membrane with NADH-ubiquinone oxidoreductase (complex I, CI) and cytochrome c oxidase (complex IV, CIV), resulting in different assemblies (supercomplex SCI(1)III(2)IV(1) and megacomplex MCI(2)III(2)IV(2)) (PubMed:28844695). Interacts with FLVCR2; this interaction occurs in the absence of heme and is disrupted upon heme binding.</text>
</comment>
<comment type="interaction">
    <interactant intactId="EBI-1224514">
        <id>P08574</id>
    </interactant>
    <interactant intactId="EBI-25833200">
        <id>Q8IWZ3-3</id>
        <label>ANKHD1</label>
    </interactant>
    <organismsDiffer>false</organismsDiffer>
    <experiments>3</experiments>
</comment>
<comment type="interaction">
    <interactant intactId="EBI-1224514">
        <id>P08574</id>
    </interactant>
    <interactant intactId="EBI-466029">
        <id>P42858</id>
        <label>HTT</label>
    </interactant>
    <organismsDiffer>false</organismsDiffer>
    <experiments>7</experiments>
</comment>
<comment type="interaction">
    <interactant intactId="EBI-1224514">
        <id>P08574</id>
    </interactant>
    <interactant intactId="EBI-359462">
        <id>Q16342</id>
        <label>PDCD2</label>
    </interactant>
    <organismsDiffer>false</organismsDiffer>
    <experiments>3</experiments>
</comment>
<comment type="interaction">
    <interactant intactId="EBI-1224514">
        <id>P08574</id>
    </interactant>
    <interactant intactId="EBI-743128">
        <id>P14927</id>
        <label>UQCRB</label>
    </interactant>
    <organismsDiffer>false</organismsDiffer>
    <experiments>3</experiments>
</comment>
<comment type="subcellular location">
    <subcellularLocation>
        <location evidence="2">Mitochondrion inner membrane</location>
        <topology evidence="2">Single-pass membrane protein</topology>
    </subcellularLocation>
</comment>
<comment type="disease" evidence="7">
    <disease id="DI-03905">
        <name>Mitochondrial complex III deficiency, nuclear type 6</name>
        <acronym>MC3DN6</acronym>
        <description>An autosomal recessive disorder caused by mitochondrial dysfunction. It is characterized by onset in early childhood of episodic acute lactic acidosis, ketoacidosis, and insulin-responsive hyperglycemia, usually associated with infection. Laboratory studies show decreased activity of mitochondrial complex III. Psychomotor development is normal.</description>
        <dbReference type="MIM" id="615453"/>
    </disease>
    <text>The disease is caused by variants affecting the gene represented in this entry.</text>
</comment>
<comment type="similarity">
    <text evidence="13">Belongs to the cytochrome c family.</text>
</comment>
<accession>P08574</accession>
<accession>Q5U062</accession>
<accession>Q6FHS7</accession>
<proteinExistence type="evidence at protein level"/>